<accession>A2RMR1</accession>
<comment type="function">
    <text evidence="1">Binds directly to 23S ribosomal RNA and is necessary for the in vitro assembly process of the 50S ribosomal subunit. It is not involved in the protein synthesizing functions of that subunit.</text>
</comment>
<comment type="similarity">
    <text evidence="1">Belongs to the bacterial ribosomal protein bL20 family.</text>
</comment>
<dbReference type="EMBL" id="AM406671">
    <property type="protein sequence ID" value="CAL98597.1"/>
    <property type="molecule type" value="Genomic_DNA"/>
</dbReference>
<dbReference type="RefSeq" id="WP_011835750.1">
    <property type="nucleotide sequence ID" value="NC_009004.1"/>
</dbReference>
<dbReference type="PDB" id="5MYJ">
    <property type="method" value="EM"/>
    <property type="resolution" value="5.60 A"/>
    <property type="chains" value="BT=1-119"/>
</dbReference>
<dbReference type="PDBsum" id="5MYJ"/>
<dbReference type="EMDB" id="EMD-3581"/>
<dbReference type="SMR" id="A2RMR1"/>
<dbReference type="STRING" id="416870.llmg_2029"/>
<dbReference type="GeneID" id="61110172"/>
<dbReference type="KEGG" id="llm:llmg_2029"/>
<dbReference type="eggNOG" id="COG0292">
    <property type="taxonomic scope" value="Bacteria"/>
</dbReference>
<dbReference type="HOGENOM" id="CLU_123265_0_1_9"/>
<dbReference type="OrthoDB" id="9808966at2"/>
<dbReference type="PhylomeDB" id="A2RMR1"/>
<dbReference type="Proteomes" id="UP000000364">
    <property type="component" value="Chromosome"/>
</dbReference>
<dbReference type="GO" id="GO:1990904">
    <property type="term" value="C:ribonucleoprotein complex"/>
    <property type="evidence" value="ECO:0007669"/>
    <property type="project" value="UniProtKB-KW"/>
</dbReference>
<dbReference type="GO" id="GO:0005840">
    <property type="term" value="C:ribosome"/>
    <property type="evidence" value="ECO:0007669"/>
    <property type="project" value="UniProtKB-KW"/>
</dbReference>
<dbReference type="GO" id="GO:0019843">
    <property type="term" value="F:rRNA binding"/>
    <property type="evidence" value="ECO:0007669"/>
    <property type="project" value="UniProtKB-UniRule"/>
</dbReference>
<dbReference type="GO" id="GO:0003735">
    <property type="term" value="F:structural constituent of ribosome"/>
    <property type="evidence" value="ECO:0007669"/>
    <property type="project" value="InterPro"/>
</dbReference>
<dbReference type="GO" id="GO:0000027">
    <property type="term" value="P:ribosomal large subunit assembly"/>
    <property type="evidence" value="ECO:0007669"/>
    <property type="project" value="UniProtKB-UniRule"/>
</dbReference>
<dbReference type="GO" id="GO:0006412">
    <property type="term" value="P:translation"/>
    <property type="evidence" value="ECO:0007669"/>
    <property type="project" value="InterPro"/>
</dbReference>
<dbReference type="CDD" id="cd07026">
    <property type="entry name" value="Ribosomal_L20"/>
    <property type="match status" value="1"/>
</dbReference>
<dbReference type="FunFam" id="1.10.1900.20:FF:000001">
    <property type="entry name" value="50S ribosomal protein L20"/>
    <property type="match status" value="1"/>
</dbReference>
<dbReference type="Gene3D" id="6.10.160.10">
    <property type="match status" value="1"/>
</dbReference>
<dbReference type="Gene3D" id="1.10.1900.20">
    <property type="entry name" value="Ribosomal protein L20"/>
    <property type="match status" value="1"/>
</dbReference>
<dbReference type="HAMAP" id="MF_00382">
    <property type="entry name" value="Ribosomal_bL20"/>
    <property type="match status" value="1"/>
</dbReference>
<dbReference type="InterPro" id="IPR005813">
    <property type="entry name" value="Ribosomal_bL20"/>
</dbReference>
<dbReference type="InterPro" id="IPR049946">
    <property type="entry name" value="RIBOSOMAL_L20_CS"/>
</dbReference>
<dbReference type="InterPro" id="IPR035566">
    <property type="entry name" value="Ribosomal_protein_bL20_C"/>
</dbReference>
<dbReference type="NCBIfam" id="TIGR01032">
    <property type="entry name" value="rplT_bact"/>
    <property type="match status" value="1"/>
</dbReference>
<dbReference type="PANTHER" id="PTHR10986">
    <property type="entry name" value="39S RIBOSOMAL PROTEIN L20"/>
    <property type="match status" value="1"/>
</dbReference>
<dbReference type="Pfam" id="PF00453">
    <property type="entry name" value="Ribosomal_L20"/>
    <property type="match status" value="1"/>
</dbReference>
<dbReference type="PRINTS" id="PR00062">
    <property type="entry name" value="RIBOSOMALL20"/>
</dbReference>
<dbReference type="SUPFAM" id="SSF74731">
    <property type="entry name" value="Ribosomal protein L20"/>
    <property type="match status" value="1"/>
</dbReference>
<dbReference type="PROSITE" id="PS00937">
    <property type="entry name" value="RIBOSOMAL_L20"/>
    <property type="match status" value="1"/>
</dbReference>
<keyword id="KW-0002">3D-structure</keyword>
<keyword id="KW-0687">Ribonucleoprotein</keyword>
<keyword id="KW-0689">Ribosomal protein</keyword>
<keyword id="KW-0694">RNA-binding</keyword>
<keyword id="KW-0699">rRNA-binding</keyword>
<name>RL20_LACLM</name>
<protein>
    <recommendedName>
        <fullName evidence="1">Large ribosomal subunit protein bL20</fullName>
    </recommendedName>
    <alternativeName>
        <fullName evidence="2">50S ribosomal protein L20</fullName>
    </alternativeName>
</protein>
<gene>
    <name evidence="1" type="primary">rplT</name>
    <name type="ordered locus">llmg_2029</name>
</gene>
<proteinExistence type="evidence at protein level"/>
<feature type="chain" id="PRO_1000048999" description="Large ribosomal subunit protein bL20">
    <location>
        <begin position="1"/>
        <end position="119"/>
    </location>
</feature>
<organism>
    <name type="scientific">Lactococcus lactis subsp. cremoris (strain MG1363)</name>
    <dbReference type="NCBI Taxonomy" id="416870"/>
    <lineage>
        <taxon>Bacteria</taxon>
        <taxon>Bacillati</taxon>
        <taxon>Bacillota</taxon>
        <taxon>Bacilli</taxon>
        <taxon>Lactobacillales</taxon>
        <taxon>Streptococcaceae</taxon>
        <taxon>Lactococcus</taxon>
        <taxon>Lactococcus cremoris subsp. cremoris</taxon>
    </lineage>
</organism>
<evidence type="ECO:0000255" key="1">
    <source>
        <dbReference type="HAMAP-Rule" id="MF_00382"/>
    </source>
</evidence>
<evidence type="ECO:0000305" key="2"/>
<reference key="1">
    <citation type="journal article" date="2007" name="J. Bacteriol.">
        <title>The complete genome sequence of the lactic acid bacterial paradigm Lactococcus lactis subsp. cremoris MG1363.</title>
        <authorList>
            <person name="Wegmann U."/>
            <person name="O'Connell-Motherway M."/>
            <person name="Zomer A."/>
            <person name="Buist G."/>
            <person name="Shearman C."/>
            <person name="Canchaya C."/>
            <person name="Ventura M."/>
            <person name="Goesmann A."/>
            <person name="Gasson M.J."/>
            <person name="Kuipers O.P."/>
            <person name="van Sinderen D."/>
            <person name="Kok J."/>
        </authorList>
    </citation>
    <scope>NUCLEOTIDE SEQUENCE [LARGE SCALE GENOMIC DNA]</scope>
    <source>
        <strain>MG1363</strain>
    </source>
</reference>
<sequence length="119" mass="13693">MARVKGSVATRKRRKRILKLAKGYYGAKHRLFKTAKEQVMNSYYYAFRDRRQKKRDFRKLWIARINAAARMNGLSYSKLMHGLKLADIEVNRKMLADIAIADAAAFTALAEEAKKALAK</sequence>